<sequence>MARYTGPVCKLCRAVGMKLYLKGIRCSSPKCAIERRNFRPGVHGQARQKLSEYAIRLKEKQKARWSYGVLEKQFRRTFSDASRATGNTGAKFLELLERRLDNVVYRLGFATSRAQARQWVNHGHFAVNGRRVSIPSYRVRPGDAITVMPNSAAFVKEALEAASLPQAPKWLEANRETLAATVKALPEREDIDTPVQELLIVEFYSR</sequence>
<protein>
    <recommendedName>
        <fullName evidence="1">Small ribosomal subunit protein uS4</fullName>
    </recommendedName>
    <alternativeName>
        <fullName evidence="2">30S ribosomal protein S4</fullName>
    </alternativeName>
</protein>
<comment type="function">
    <text evidence="1">One of the primary rRNA binding proteins, it binds directly to 16S rRNA where it nucleates assembly of the body of the 30S subunit.</text>
</comment>
<comment type="function">
    <text evidence="1">With S5 and S12 plays an important role in translational accuracy.</text>
</comment>
<comment type="subunit">
    <text evidence="1">Part of the 30S ribosomal subunit. Contacts protein S5. The interaction surface between S4 and S5 is involved in control of translational fidelity.</text>
</comment>
<comment type="similarity">
    <text evidence="1">Belongs to the universal ribosomal protein uS4 family.</text>
</comment>
<feature type="chain" id="PRO_0000132389" description="Small ribosomal subunit protein uS4">
    <location>
        <begin position="1"/>
        <end position="206"/>
    </location>
</feature>
<feature type="domain" description="S4 RNA-binding" evidence="1">
    <location>
        <begin position="98"/>
        <end position="176"/>
    </location>
</feature>
<proteinExistence type="inferred from homology"/>
<evidence type="ECO:0000255" key="1">
    <source>
        <dbReference type="HAMAP-Rule" id="MF_01306"/>
    </source>
</evidence>
<evidence type="ECO:0000305" key="2"/>
<gene>
    <name evidence="1" type="primary">rpsD</name>
    <name evidence="1" type="synonym">rps4</name>
    <name type="ordered locus">gll3572</name>
</gene>
<organism>
    <name type="scientific">Gloeobacter violaceus (strain ATCC 29082 / PCC 7421)</name>
    <dbReference type="NCBI Taxonomy" id="251221"/>
    <lineage>
        <taxon>Bacteria</taxon>
        <taxon>Bacillati</taxon>
        <taxon>Cyanobacteriota</taxon>
        <taxon>Cyanophyceae</taxon>
        <taxon>Gloeobacterales</taxon>
        <taxon>Gloeobacteraceae</taxon>
        <taxon>Gloeobacter</taxon>
    </lineage>
</organism>
<reference key="1">
    <citation type="journal article" date="2003" name="DNA Res.">
        <title>Complete genome structure of Gloeobacter violaceus PCC 7421, a cyanobacterium that lacks thylakoids.</title>
        <authorList>
            <person name="Nakamura Y."/>
            <person name="Kaneko T."/>
            <person name="Sato S."/>
            <person name="Mimuro M."/>
            <person name="Miyashita H."/>
            <person name="Tsuchiya T."/>
            <person name="Sasamoto S."/>
            <person name="Watanabe A."/>
            <person name="Kawashima K."/>
            <person name="Kishida Y."/>
            <person name="Kiyokawa C."/>
            <person name="Kohara M."/>
            <person name="Matsumoto M."/>
            <person name="Matsuno A."/>
            <person name="Nakazaki N."/>
            <person name="Shimpo S."/>
            <person name="Takeuchi C."/>
            <person name="Yamada M."/>
            <person name="Tabata S."/>
        </authorList>
    </citation>
    <scope>NUCLEOTIDE SEQUENCE [LARGE SCALE GENOMIC DNA]</scope>
    <source>
        <strain>ATCC 29082 / PCC 7421</strain>
    </source>
</reference>
<name>RS4_GLOVI</name>
<dbReference type="EMBL" id="BA000045">
    <property type="protein sequence ID" value="BAC91513.1"/>
    <property type="molecule type" value="Genomic_DNA"/>
</dbReference>
<dbReference type="RefSeq" id="NP_926518.1">
    <property type="nucleotide sequence ID" value="NC_005125.1"/>
</dbReference>
<dbReference type="RefSeq" id="WP_011143561.1">
    <property type="nucleotide sequence ID" value="NC_005125.1"/>
</dbReference>
<dbReference type="SMR" id="Q7NFF4"/>
<dbReference type="FunCoup" id="Q7NFF4">
    <property type="interactions" value="269"/>
</dbReference>
<dbReference type="STRING" id="251221.gene:10761087"/>
<dbReference type="EnsemblBacteria" id="BAC91513">
    <property type="protein sequence ID" value="BAC91513"/>
    <property type="gene ID" value="BAC91513"/>
</dbReference>
<dbReference type="KEGG" id="gvi:gll3572"/>
<dbReference type="PATRIC" id="fig|251221.4.peg.3605"/>
<dbReference type="eggNOG" id="COG0522">
    <property type="taxonomic scope" value="Bacteria"/>
</dbReference>
<dbReference type="HOGENOM" id="CLU_092403_0_2_3"/>
<dbReference type="InParanoid" id="Q7NFF4"/>
<dbReference type="OrthoDB" id="9803672at2"/>
<dbReference type="PhylomeDB" id="Q7NFF4"/>
<dbReference type="Proteomes" id="UP000000557">
    <property type="component" value="Chromosome"/>
</dbReference>
<dbReference type="GO" id="GO:0015935">
    <property type="term" value="C:small ribosomal subunit"/>
    <property type="evidence" value="ECO:0000318"/>
    <property type="project" value="GO_Central"/>
</dbReference>
<dbReference type="GO" id="GO:0019843">
    <property type="term" value="F:rRNA binding"/>
    <property type="evidence" value="ECO:0000318"/>
    <property type="project" value="GO_Central"/>
</dbReference>
<dbReference type="GO" id="GO:0003735">
    <property type="term" value="F:structural constituent of ribosome"/>
    <property type="evidence" value="ECO:0000318"/>
    <property type="project" value="GO_Central"/>
</dbReference>
<dbReference type="GO" id="GO:0042274">
    <property type="term" value="P:ribosomal small subunit biogenesis"/>
    <property type="evidence" value="ECO:0000318"/>
    <property type="project" value="GO_Central"/>
</dbReference>
<dbReference type="GO" id="GO:0006412">
    <property type="term" value="P:translation"/>
    <property type="evidence" value="ECO:0007669"/>
    <property type="project" value="UniProtKB-UniRule"/>
</dbReference>
<dbReference type="CDD" id="cd00165">
    <property type="entry name" value="S4"/>
    <property type="match status" value="1"/>
</dbReference>
<dbReference type="FunFam" id="1.10.1050.10:FF:000001">
    <property type="entry name" value="30S ribosomal protein S4"/>
    <property type="match status" value="1"/>
</dbReference>
<dbReference type="FunFam" id="3.10.290.10:FF:000001">
    <property type="entry name" value="30S ribosomal protein S4"/>
    <property type="match status" value="1"/>
</dbReference>
<dbReference type="Gene3D" id="1.10.1050.10">
    <property type="entry name" value="Ribosomal Protein S4 Delta 41, Chain A, domain 1"/>
    <property type="match status" value="1"/>
</dbReference>
<dbReference type="Gene3D" id="3.10.290.10">
    <property type="entry name" value="RNA-binding S4 domain"/>
    <property type="match status" value="1"/>
</dbReference>
<dbReference type="HAMAP" id="MF_01306_B">
    <property type="entry name" value="Ribosomal_uS4_B"/>
    <property type="match status" value="1"/>
</dbReference>
<dbReference type="InterPro" id="IPR022801">
    <property type="entry name" value="Ribosomal_uS4"/>
</dbReference>
<dbReference type="InterPro" id="IPR005709">
    <property type="entry name" value="Ribosomal_uS4_bac-type"/>
</dbReference>
<dbReference type="InterPro" id="IPR001912">
    <property type="entry name" value="Ribosomal_uS4_N"/>
</dbReference>
<dbReference type="InterPro" id="IPR002942">
    <property type="entry name" value="S4_RNA-bd"/>
</dbReference>
<dbReference type="InterPro" id="IPR036986">
    <property type="entry name" value="S4_RNA-bd_sf"/>
</dbReference>
<dbReference type="NCBIfam" id="NF003717">
    <property type="entry name" value="PRK05327.1"/>
    <property type="match status" value="1"/>
</dbReference>
<dbReference type="NCBIfam" id="TIGR01017">
    <property type="entry name" value="rpsD_bact"/>
    <property type="match status" value="1"/>
</dbReference>
<dbReference type="PANTHER" id="PTHR11831">
    <property type="entry name" value="30S 40S RIBOSOMAL PROTEIN"/>
    <property type="match status" value="1"/>
</dbReference>
<dbReference type="PANTHER" id="PTHR11831:SF4">
    <property type="entry name" value="SMALL RIBOSOMAL SUBUNIT PROTEIN US4M"/>
    <property type="match status" value="1"/>
</dbReference>
<dbReference type="Pfam" id="PF00163">
    <property type="entry name" value="Ribosomal_S4"/>
    <property type="match status" value="1"/>
</dbReference>
<dbReference type="Pfam" id="PF01479">
    <property type="entry name" value="S4"/>
    <property type="match status" value="1"/>
</dbReference>
<dbReference type="SMART" id="SM01390">
    <property type="entry name" value="Ribosomal_S4"/>
    <property type="match status" value="1"/>
</dbReference>
<dbReference type="SMART" id="SM00363">
    <property type="entry name" value="S4"/>
    <property type="match status" value="1"/>
</dbReference>
<dbReference type="SUPFAM" id="SSF55174">
    <property type="entry name" value="Alpha-L RNA-binding motif"/>
    <property type="match status" value="1"/>
</dbReference>
<dbReference type="PROSITE" id="PS50889">
    <property type="entry name" value="S4"/>
    <property type="match status" value="1"/>
</dbReference>
<accession>Q7NFF4</accession>
<keyword id="KW-1185">Reference proteome</keyword>
<keyword id="KW-0687">Ribonucleoprotein</keyword>
<keyword id="KW-0689">Ribosomal protein</keyword>
<keyword id="KW-0694">RNA-binding</keyword>
<keyword id="KW-0699">rRNA-binding</keyword>